<feature type="chain" id="PRO_0000303502" description="tRNA N6-adenosine threonylcarbamoyltransferase">
    <location>
        <begin position="1"/>
        <end position="341"/>
    </location>
</feature>
<feature type="binding site" evidence="1">
    <location>
        <position position="111"/>
    </location>
    <ligand>
        <name>Fe cation</name>
        <dbReference type="ChEBI" id="CHEBI:24875"/>
    </ligand>
</feature>
<feature type="binding site" evidence="1">
    <location>
        <position position="115"/>
    </location>
    <ligand>
        <name>Fe cation</name>
        <dbReference type="ChEBI" id="CHEBI:24875"/>
    </ligand>
</feature>
<feature type="binding site" evidence="1">
    <location>
        <begin position="134"/>
        <end position="138"/>
    </location>
    <ligand>
        <name>substrate</name>
    </ligand>
</feature>
<feature type="binding site" evidence="1">
    <location>
        <position position="167"/>
    </location>
    <ligand>
        <name>substrate</name>
    </ligand>
</feature>
<feature type="binding site" evidence="1">
    <location>
        <position position="180"/>
    </location>
    <ligand>
        <name>substrate</name>
    </ligand>
</feature>
<feature type="binding site" evidence="1">
    <location>
        <position position="272"/>
    </location>
    <ligand>
        <name>substrate</name>
    </ligand>
</feature>
<feature type="binding site" evidence="1">
    <location>
        <position position="300"/>
    </location>
    <ligand>
        <name>Fe cation</name>
        <dbReference type="ChEBI" id="CHEBI:24875"/>
    </ligand>
</feature>
<dbReference type="EC" id="2.3.1.234" evidence="1"/>
<dbReference type="EMBL" id="CP000510">
    <property type="protein sequence ID" value="ABM02180.1"/>
    <property type="molecule type" value="Genomic_DNA"/>
</dbReference>
<dbReference type="RefSeq" id="WP_011768739.1">
    <property type="nucleotide sequence ID" value="NC_008709.1"/>
</dbReference>
<dbReference type="SMR" id="A1SRR5"/>
<dbReference type="STRING" id="357804.Ping_0314"/>
<dbReference type="KEGG" id="pin:Ping_0314"/>
<dbReference type="eggNOG" id="COG0533">
    <property type="taxonomic scope" value="Bacteria"/>
</dbReference>
<dbReference type="HOGENOM" id="CLU_023208_0_0_6"/>
<dbReference type="OrthoDB" id="9806197at2"/>
<dbReference type="Proteomes" id="UP000000639">
    <property type="component" value="Chromosome"/>
</dbReference>
<dbReference type="GO" id="GO:0005737">
    <property type="term" value="C:cytoplasm"/>
    <property type="evidence" value="ECO:0007669"/>
    <property type="project" value="UniProtKB-SubCell"/>
</dbReference>
<dbReference type="GO" id="GO:0005506">
    <property type="term" value="F:iron ion binding"/>
    <property type="evidence" value="ECO:0007669"/>
    <property type="project" value="UniProtKB-UniRule"/>
</dbReference>
<dbReference type="GO" id="GO:0061711">
    <property type="term" value="F:N(6)-L-threonylcarbamoyladenine synthase activity"/>
    <property type="evidence" value="ECO:0007669"/>
    <property type="project" value="UniProtKB-EC"/>
</dbReference>
<dbReference type="GO" id="GO:0002949">
    <property type="term" value="P:tRNA threonylcarbamoyladenosine modification"/>
    <property type="evidence" value="ECO:0007669"/>
    <property type="project" value="UniProtKB-UniRule"/>
</dbReference>
<dbReference type="CDD" id="cd24133">
    <property type="entry name" value="ASKHA_NBD_TsaD_bac"/>
    <property type="match status" value="1"/>
</dbReference>
<dbReference type="FunFam" id="3.30.420.40:FF:000031">
    <property type="entry name" value="tRNA N6-adenosine threonylcarbamoyltransferase"/>
    <property type="match status" value="1"/>
</dbReference>
<dbReference type="Gene3D" id="3.30.420.40">
    <property type="match status" value="2"/>
</dbReference>
<dbReference type="HAMAP" id="MF_01445">
    <property type="entry name" value="TsaD"/>
    <property type="match status" value="1"/>
</dbReference>
<dbReference type="InterPro" id="IPR043129">
    <property type="entry name" value="ATPase_NBD"/>
</dbReference>
<dbReference type="InterPro" id="IPR000905">
    <property type="entry name" value="Gcp-like_dom"/>
</dbReference>
<dbReference type="InterPro" id="IPR017861">
    <property type="entry name" value="KAE1/TsaD"/>
</dbReference>
<dbReference type="InterPro" id="IPR017860">
    <property type="entry name" value="Peptidase_M22_CS"/>
</dbReference>
<dbReference type="InterPro" id="IPR022450">
    <property type="entry name" value="TsaD"/>
</dbReference>
<dbReference type="NCBIfam" id="TIGR00329">
    <property type="entry name" value="gcp_kae1"/>
    <property type="match status" value="1"/>
</dbReference>
<dbReference type="NCBIfam" id="TIGR03723">
    <property type="entry name" value="T6A_TsaD_YgjD"/>
    <property type="match status" value="1"/>
</dbReference>
<dbReference type="PANTHER" id="PTHR11735">
    <property type="entry name" value="TRNA N6-ADENOSINE THREONYLCARBAMOYLTRANSFERASE"/>
    <property type="match status" value="1"/>
</dbReference>
<dbReference type="PANTHER" id="PTHR11735:SF6">
    <property type="entry name" value="TRNA N6-ADENOSINE THREONYLCARBAMOYLTRANSFERASE, MITOCHONDRIAL"/>
    <property type="match status" value="1"/>
</dbReference>
<dbReference type="Pfam" id="PF00814">
    <property type="entry name" value="TsaD"/>
    <property type="match status" value="1"/>
</dbReference>
<dbReference type="PRINTS" id="PR00789">
    <property type="entry name" value="OSIALOPTASE"/>
</dbReference>
<dbReference type="SUPFAM" id="SSF53067">
    <property type="entry name" value="Actin-like ATPase domain"/>
    <property type="match status" value="2"/>
</dbReference>
<dbReference type="PROSITE" id="PS01016">
    <property type="entry name" value="GLYCOPROTEASE"/>
    <property type="match status" value="1"/>
</dbReference>
<comment type="function">
    <text evidence="1">Required for the formation of a threonylcarbamoyl group on adenosine at position 37 (t(6)A37) in tRNAs that read codons beginning with adenine. Is involved in the transfer of the threonylcarbamoyl moiety of threonylcarbamoyl-AMP (TC-AMP) to the N6 group of A37, together with TsaE and TsaB. TsaD likely plays a direct catalytic role in this reaction.</text>
</comment>
<comment type="catalytic activity">
    <reaction evidence="1">
        <text>L-threonylcarbamoyladenylate + adenosine(37) in tRNA = N(6)-L-threonylcarbamoyladenosine(37) in tRNA + AMP + H(+)</text>
        <dbReference type="Rhea" id="RHEA:37059"/>
        <dbReference type="Rhea" id="RHEA-COMP:10162"/>
        <dbReference type="Rhea" id="RHEA-COMP:10163"/>
        <dbReference type="ChEBI" id="CHEBI:15378"/>
        <dbReference type="ChEBI" id="CHEBI:73682"/>
        <dbReference type="ChEBI" id="CHEBI:74411"/>
        <dbReference type="ChEBI" id="CHEBI:74418"/>
        <dbReference type="ChEBI" id="CHEBI:456215"/>
        <dbReference type="EC" id="2.3.1.234"/>
    </reaction>
</comment>
<comment type="cofactor">
    <cofactor evidence="1">
        <name>Fe(2+)</name>
        <dbReference type="ChEBI" id="CHEBI:29033"/>
    </cofactor>
    <text evidence="1">Binds 1 Fe(2+) ion per subunit.</text>
</comment>
<comment type="subcellular location">
    <subcellularLocation>
        <location evidence="1">Cytoplasm</location>
    </subcellularLocation>
</comment>
<comment type="similarity">
    <text evidence="1">Belongs to the KAE1 / TsaD family.</text>
</comment>
<gene>
    <name evidence="1" type="primary">tsaD</name>
    <name type="synonym">gcp</name>
    <name type="ordered locus">Ping_0314</name>
</gene>
<reference key="1">
    <citation type="journal article" date="2008" name="BMC Genomics">
        <title>Genomics of an extreme psychrophile, Psychromonas ingrahamii.</title>
        <authorList>
            <person name="Riley M."/>
            <person name="Staley J.T."/>
            <person name="Danchin A."/>
            <person name="Wang T.Z."/>
            <person name="Brettin T.S."/>
            <person name="Hauser L.J."/>
            <person name="Land M.L."/>
            <person name="Thompson L.S."/>
        </authorList>
    </citation>
    <scope>NUCLEOTIDE SEQUENCE [LARGE SCALE GENOMIC DNA]</scope>
    <source>
        <strain>DSM 17664 / CCUG 51855 / 37</strain>
    </source>
</reference>
<evidence type="ECO:0000255" key="1">
    <source>
        <dbReference type="HAMAP-Rule" id="MF_01445"/>
    </source>
</evidence>
<protein>
    <recommendedName>
        <fullName evidence="1">tRNA N6-adenosine threonylcarbamoyltransferase</fullName>
        <ecNumber evidence="1">2.3.1.234</ecNumber>
    </recommendedName>
    <alternativeName>
        <fullName evidence="1">N6-L-threonylcarbamoyladenine synthase</fullName>
        <shortName evidence="1">t(6)A synthase</shortName>
    </alternativeName>
    <alternativeName>
        <fullName evidence="1">t(6)A37 threonylcarbamoyladenosine biosynthesis protein TsaD</fullName>
    </alternativeName>
    <alternativeName>
        <fullName evidence="1">tRNA threonylcarbamoyladenosine biosynthesis protein TsaD</fullName>
    </alternativeName>
</protein>
<name>TSAD_PSYIN</name>
<organism>
    <name type="scientific">Psychromonas ingrahamii (strain DSM 17664 / CCUG 51855 / 37)</name>
    <dbReference type="NCBI Taxonomy" id="357804"/>
    <lineage>
        <taxon>Bacteria</taxon>
        <taxon>Pseudomonadati</taxon>
        <taxon>Pseudomonadota</taxon>
        <taxon>Gammaproteobacteria</taxon>
        <taxon>Alteromonadales</taxon>
        <taxon>Psychromonadaceae</taxon>
        <taxon>Psychromonas</taxon>
    </lineage>
</organism>
<proteinExistence type="inferred from homology"/>
<sequence>MRILGIETSCDETGIAIYDDQLGLLSHQLYSQVELHADYGGVVPELASRDHVRKTIPLIKEALVAANCTKESLDGIAYTAGPGLVGALLVGSCIGRSLAYAWNIPAIAVHHMEGHLLAPMLEENRPEFPFLALLVSGGHTLMVEVENIGEYQVLGESIDDAAGEAFDKTAKLLGLDYPGGPRLAKLAEKGEPKRFIFPRPMTTKPGLDFSFSGLKTFAANTIAKEGKDPQTQADIALAFQDAVIDTVAIKCKRALKQTGLKRLVVAGGVSANLSLRSQLAVLMKSLGGEVFYPRNEFCTDNGAMIAYAGMQRLKAGHFEGLGIQAKPRWPLDQLLSVRSEL</sequence>
<keyword id="KW-0012">Acyltransferase</keyword>
<keyword id="KW-0963">Cytoplasm</keyword>
<keyword id="KW-0408">Iron</keyword>
<keyword id="KW-0479">Metal-binding</keyword>
<keyword id="KW-1185">Reference proteome</keyword>
<keyword id="KW-0808">Transferase</keyword>
<keyword id="KW-0819">tRNA processing</keyword>
<accession>A1SRR5</accession>